<name>GCSPB_SACI3</name>
<feature type="chain" id="PRO_1000212673" description="Probable glycine dehydrogenase (decarboxylating) subunit 2">
    <location>
        <begin position="1"/>
        <end position="509"/>
    </location>
</feature>
<feature type="modified residue" description="N6-(pyridoxal phosphate)lysine" evidence="1">
    <location>
        <position position="278"/>
    </location>
</feature>
<reference key="1">
    <citation type="journal article" date="2009" name="Proc. Natl. Acad. Sci. U.S.A.">
        <title>Biogeography of the Sulfolobus islandicus pan-genome.</title>
        <authorList>
            <person name="Reno M.L."/>
            <person name="Held N.L."/>
            <person name="Fields C.J."/>
            <person name="Burke P.V."/>
            <person name="Whitaker R.J."/>
        </authorList>
    </citation>
    <scope>NUCLEOTIDE SEQUENCE [LARGE SCALE GENOMIC DNA]</scope>
    <source>
        <strain>M.16.27</strain>
    </source>
</reference>
<sequence>MVWRQAKWDEPLIFELNNSGANRQGLLINKDDEIRSEIKEMKIPKNLLRENGPNLPSLSELEVVRHFIRLSQMNFGVDVGIMPLGSCTMKYNPKIEEKATAITESHHPLEDEDHVQGILEMIYELQNWFSEITGMDECSLQVPAGSAGEFAGVLMIKKYHEDHNRNYKDTMLVADTAHGTNPASAAMAGYKVMYVKSNGEGLVDMDILREIVNDKTAGFMLTNPNTLGLFEENILEISKIIHSANAILYYDGANLNGVLGIARPGDMGFDIVHLNLHKTFAVPHGGGGPGAGAICAKGELVNYLPYPMVEKVNGKYRLSKIPKNSVGKIATFYGNVGNLARSFAYLLGLGPQGVQMVGKMSTLATNYLIAKLRDIKELELIAPNRHRKHEVVFSVKQLMENYGVSANDVAKALLDSGFYAPTIYFPPIIEEALMIEPTETESKETLDMFAEALKKIVEDAKRNPEQLLKSPSNTSIARLDQAYANHPSTITPTYRVLKLRRMGKINYLK</sequence>
<protein>
    <recommendedName>
        <fullName evidence="1">Probable glycine dehydrogenase (decarboxylating) subunit 2</fullName>
        <ecNumber evidence="1">1.4.4.2</ecNumber>
    </recommendedName>
    <alternativeName>
        <fullName evidence="1">Glycine cleavage system P-protein subunit 2</fullName>
    </alternativeName>
    <alternativeName>
        <fullName evidence="1">Glycine decarboxylase subunit 2</fullName>
    </alternativeName>
    <alternativeName>
        <fullName evidence="1">Glycine dehydrogenase (aminomethyl-transferring) subunit 2</fullName>
    </alternativeName>
</protein>
<dbReference type="EC" id="1.4.4.2" evidence="1"/>
<dbReference type="EMBL" id="CP001401">
    <property type="protein sequence ID" value="ACP55237.1"/>
    <property type="molecule type" value="Genomic_DNA"/>
</dbReference>
<dbReference type="RefSeq" id="WP_012711310.1">
    <property type="nucleotide sequence ID" value="NC_012632.1"/>
</dbReference>
<dbReference type="SMR" id="C3N5G2"/>
<dbReference type="GeneID" id="84061617"/>
<dbReference type="KEGG" id="sim:M1627_1354"/>
<dbReference type="HOGENOM" id="CLU_004620_5_0_2"/>
<dbReference type="Proteomes" id="UP000002307">
    <property type="component" value="Chromosome"/>
</dbReference>
<dbReference type="GO" id="GO:0005829">
    <property type="term" value="C:cytosol"/>
    <property type="evidence" value="ECO:0007669"/>
    <property type="project" value="TreeGrafter"/>
</dbReference>
<dbReference type="GO" id="GO:0005960">
    <property type="term" value="C:glycine cleavage complex"/>
    <property type="evidence" value="ECO:0007669"/>
    <property type="project" value="TreeGrafter"/>
</dbReference>
<dbReference type="GO" id="GO:0016594">
    <property type="term" value="F:glycine binding"/>
    <property type="evidence" value="ECO:0007669"/>
    <property type="project" value="TreeGrafter"/>
</dbReference>
<dbReference type="GO" id="GO:0004375">
    <property type="term" value="F:glycine dehydrogenase (decarboxylating) activity"/>
    <property type="evidence" value="ECO:0007669"/>
    <property type="project" value="UniProtKB-EC"/>
</dbReference>
<dbReference type="GO" id="GO:0030170">
    <property type="term" value="F:pyridoxal phosphate binding"/>
    <property type="evidence" value="ECO:0007669"/>
    <property type="project" value="TreeGrafter"/>
</dbReference>
<dbReference type="GO" id="GO:0019464">
    <property type="term" value="P:glycine decarboxylation via glycine cleavage system"/>
    <property type="evidence" value="ECO:0007669"/>
    <property type="project" value="UniProtKB-UniRule"/>
</dbReference>
<dbReference type="CDD" id="cd00613">
    <property type="entry name" value="GDC-P"/>
    <property type="match status" value="1"/>
</dbReference>
<dbReference type="FunFam" id="3.40.640.10:FF:000224">
    <property type="entry name" value="Probable glycine dehydrogenase (decarboxylating) subunit 2"/>
    <property type="match status" value="1"/>
</dbReference>
<dbReference type="FunFam" id="3.90.1150.10:FF:000014">
    <property type="entry name" value="Probable glycine dehydrogenase (decarboxylating) subunit 2"/>
    <property type="match status" value="1"/>
</dbReference>
<dbReference type="Gene3D" id="6.20.440.10">
    <property type="match status" value="1"/>
</dbReference>
<dbReference type="Gene3D" id="3.90.1150.10">
    <property type="entry name" value="Aspartate Aminotransferase, domain 1"/>
    <property type="match status" value="1"/>
</dbReference>
<dbReference type="Gene3D" id="3.40.640.10">
    <property type="entry name" value="Type I PLP-dependent aspartate aminotransferase-like (Major domain)"/>
    <property type="match status" value="1"/>
</dbReference>
<dbReference type="HAMAP" id="MF_00713">
    <property type="entry name" value="GcvPB"/>
    <property type="match status" value="1"/>
</dbReference>
<dbReference type="InterPro" id="IPR023012">
    <property type="entry name" value="GcvPB"/>
</dbReference>
<dbReference type="InterPro" id="IPR049316">
    <property type="entry name" value="GDC-P_C"/>
</dbReference>
<dbReference type="InterPro" id="IPR049315">
    <property type="entry name" value="GDC-P_N"/>
</dbReference>
<dbReference type="InterPro" id="IPR020581">
    <property type="entry name" value="GDC_P"/>
</dbReference>
<dbReference type="InterPro" id="IPR015424">
    <property type="entry name" value="PyrdxlP-dep_Trfase"/>
</dbReference>
<dbReference type="InterPro" id="IPR015421">
    <property type="entry name" value="PyrdxlP-dep_Trfase_major"/>
</dbReference>
<dbReference type="InterPro" id="IPR015422">
    <property type="entry name" value="PyrdxlP-dep_Trfase_small"/>
</dbReference>
<dbReference type="NCBIfam" id="NF003346">
    <property type="entry name" value="PRK04366.1"/>
    <property type="match status" value="1"/>
</dbReference>
<dbReference type="PANTHER" id="PTHR11773:SF1">
    <property type="entry name" value="GLYCINE DEHYDROGENASE (DECARBOXYLATING), MITOCHONDRIAL"/>
    <property type="match status" value="1"/>
</dbReference>
<dbReference type="PANTHER" id="PTHR11773">
    <property type="entry name" value="GLYCINE DEHYDROGENASE, DECARBOXYLATING"/>
    <property type="match status" value="1"/>
</dbReference>
<dbReference type="Pfam" id="PF21478">
    <property type="entry name" value="GcvP2_C"/>
    <property type="match status" value="1"/>
</dbReference>
<dbReference type="Pfam" id="PF02347">
    <property type="entry name" value="GDC-P"/>
    <property type="match status" value="1"/>
</dbReference>
<dbReference type="SUPFAM" id="SSF53383">
    <property type="entry name" value="PLP-dependent transferases"/>
    <property type="match status" value="1"/>
</dbReference>
<proteinExistence type="inferred from homology"/>
<organism>
    <name type="scientific">Saccharolobus islandicus (strain M.16.27)</name>
    <name type="common">Sulfolobus islandicus</name>
    <dbReference type="NCBI Taxonomy" id="427318"/>
    <lineage>
        <taxon>Archaea</taxon>
        <taxon>Thermoproteota</taxon>
        <taxon>Thermoprotei</taxon>
        <taxon>Sulfolobales</taxon>
        <taxon>Sulfolobaceae</taxon>
        <taxon>Saccharolobus</taxon>
    </lineage>
</organism>
<comment type="function">
    <text evidence="1">The glycine cleavage system catalyzes the degradation of glycine. The P protein binds the alpha-amino group of glycine through its pyridoxal phosphate cofactor; CO(2) is released and the remaining methylamine moiety is then transferred to the lipoamide cofactor of the H protein.</text>
</comment>
<comment type="catalytic activity">
    <reaction evidence="1">
        <text>N(6)-[(R)-lipoyl]-L-lysyl-[glycine-cleavage complex H protein] + glycine + H(+) = N(6)-[(R)-S(8)-aminomethyldihydrolipoyl]-L-lysyl-[glycine-cleavage complex H protein] + CO2</text>
        <dbReference type="Rhea" id="RHEA:24304"/>
        <dbReference type="Rhea" id="RHEA-COMP:10494"/>
        <dbReference type="Rhea" id="RHEA-COMP:10495"/>
        <dbReference type="ChEBI" id="CHEBI:15378"/>
        <dbReference type="ChEBI" id="CHEBI:16526"/>
        <dbReference type="ChEBI" id="CHEBI:57305"/>
        <dbReference type="ChEBI" id="CHEBI:83099"/>
        <dbReference type="ChEBI" id="CHEBI:83143"/>
        <dbReference type="EC" id="1.4.4.2"/>
    </reaction>
</comment>
<comment type="cofactor">
    <cofactor evidence="1">
        <name>pyridoxal 5'-phosphate</name>
        <dbReference type="ChEBI" id="CHEBI:597326"/>
    </cofactor>
</comment>
<comment type="subunit">
    <text evidence="1">The glycine cleavage system is composed of four proteins: P, T, L and H. In this organism, the P 'protein' is a heterodimer of two subunits.</text>
</comment>
<comment type="similarity">
    <text evidence="1">Belongs to the GcvP family. C-terminal subunit subfamily.</text>
</comment>
<accession>C3N5G2</accession>
<keyword id="KW-0560">Oxidoreductase</keyword>
<keyword id="KW-0663">Pyridoxal phosphate</keyword>
<evidence type="ECO:0000255" key="1">
    <source>
        <dbReference type="HAMAP-Rule" id="MF_00713"/>
    </source>
</evidence>
<gene>
    <name evidence="1" type="primary">gcvPB</name>
    <name type="ordered locus">M1627_1354</name>
</gene>